<protein>
    <recommendedName>
        <fullName evidence="1">5'-nucleotidase SurE</fullName>
        <ecNumber evidence="1">3.1.3.5</ecNumber>
    </recommendedName>
    <alternativeName>
        <fullName evidence="1">Nucleoside 5'-monophosphate phosphohydrolase</fullName>
    </alternativeName>
</protein>
<reference key="1">
    <citation type="submission" date="2007-05" db="EMBL/GenBank/DDBJ databases">
        <title>Complete sequence of Thermotoga petrophila RKU-1.</title>
        <authorList>
            <consortium name="US DOE Joint Genome Institute"/>
            <person name="Copeland A."/>
            <person name="Lucas S."/>
            <person name="Lapidus A."/>
            <person name="Barry K."/>
            <person name="Glavina del Rio T."/>
            <person name="Dalin E."/>
            <person name="Tice H."/>
            <person name="Pitluck S."/>
            <person name="Sims D."/>
            <person name="Brettin T."/>
            <person name="Bruce D."/>
            <person name="Detter J.C."/>
            <person name="Han C."/>
            <person name="Tapia R."/>
            <person name="Schmutz J."/>
            <person name="Larimer F."/>
            <person name="Land M."/>
            <person name="Hauser L."/>
            <person name="Kyrpides N."/>
            <person name="Mikhailova N."/>
            <person name="Nelson K."/>
            <person name="Gogarten J.P."/>
            <person name="Noll K."/>
            <person name="Richardson P."/>
        </authorList>
    </citation>
    <scope>NUCLEOTIDE SEQUENCE [LARGE SCALE GENOMIC DNA]</scope>
    <source>
        <strain>ATCC BAA-488 / DSM 13995 / JCM 10881 / RKU-1</strain>
    </source>
</reference>
<name>SURE_THEP1</name>
<evidence type="ECO:0000255" key="1">
    <source>
        <dbReference type="HAMAP-Rule" id="MF_00060"/>
    </source>
</evidence>
<comment type="function">
    <text evidence="1">Nucleotidase that shows phosphatase activity on nucleoside 5'-monophosphates.</text>
</comment>
<comment type="catalytic activity">
    <reaction evidence="1">
        <text>a ribonucleoside 5'-phosphate + H2O = a ribonucleoside + phosphate</text>
        <dbReference type="Rhea" id="RHEA:12484"/>
        <dbReference type="ChEBI" id="CHEBI:15377"/>
        <dbReference type="ChEBI" id="CHEBI:18254"/>
        <dbReference type="ChEBI" id="CHEBI:43474"/>
        <dbReference type="ChEBI" id="CHEBI:58043"/>
        <dbReference type="EC" id="3.1.3.5"/>
    </reaction>
</comment>
<comment type="cofactor">
    <cofactor evidence="1">
        <name>a divalent metal cation</name>
        <dbReference type="ChEBI" id="CHEBI:60240"/>
    </cofactor>
    <text evidence="1">Binds 1 divalent metal cation per subunit.</text>
</comment>
<comment type="subcellular location">
    <subcellularLocation>
        <location evidence="1">Cytoplasm</location>
    </subcellularLocation>
</comment>
<comment type="similarity">
    <text evidence="1">Belongs to the SurE nucleotidase family.</text>
</comment>
<proteinExistence type="inferred from homology"/>
<accession>A5ILS0</accession>
<gene>
    <name evidence="1" type="primary">surE</name>
    <name type="ordered locus">Tpet_1129</name>
</gene>
<feature type="chain" id="PRO_1000007796" description="5'-nucleotidase SurE">
    <location>
        <begin position="1"/>
        <end position="247"/>
    </location>
</feature>
<feature type="binding site" evidence="1">
    <location>
        <position position="8"/>
    </location>
    <ligand>
        <name>a divalent metal cation</name>
        <dbReference type="ChEBI" id="CHEBI:60240"/>
    </ligand>
</feature>
<feature type="binding site" evidence="1">
    <location>
        <position position="9"/>
    </location>
    <ligand>
        <name>a divalent metal cation</name>
        <dbReference type="ChEBI" id="CHEBI:60240"/>
    </ligand>
</feature>
<feature type="binding site" evidence="1">
    <location>
        <position position="39"/>
    </location>
    <ligand>
        <name>a divalent metal cation</name>
        <dbReference type="ChEBI" id="CHEBI:60240"/>
    </ligand>
</feature>
<feature type="binding site" evidence="1">
    <location>
        <position position="95"/>
    </location>
    <ligand>
        <name>a divalent metal cation</name>
        <dbReference type="ChEBI" id="CHEBI:60240"/>
    </ligand>
</feature>
<keyword id="KW-0963">Cytoplasm</keyword>
<keyword id="KW-0378">Hydrolase</keyword>
<keyword id="KW-0479">Metal-binding</keyword>
<keyword id="KW-0547">Nucleotide-binding</keyword>
<organism>
    <name type="scientific">Thermotoga petrophila (strain ATCC BAA-488 / DSM 13995 / JCM 10881 / RKU-1)</name>
    <dbReference type="NCBI Taxonomy" id="390874"/>
    <lineage>
        <taxon>Bacteria</taxon>
        <taxon>Thermotogati</taxon>
        <taxon>Thermotogota</taxon>
        <taxon>Thermotogae</taxon>
        <taxon>Thermotogales</taxon>
        <taxon>Thermotogaceae</taxon>
        <taxon>Thermotoga</taxon>
    </lineage>
</organism>
<dbReference type="EC" id="3.1.3.5" evidence="1"/>
<dbReference type="EMBL" id="CP000702">
    <property type="protein sequence ID" value="ABQ47143.1"/>
    <property type="molecule type" value="Genomic_DNA"/>
</dbReference>
<dbReference type="RefSeq" id="WP_011943661.1">
    <property type="nucleotide sequence ID" value="NC_009486.1"/>
</dbReference>
<dbReference type="SMR" id="A5ILS0"/>
<dbReference type="STRING" id="390874.Tpet_1129"/>
<dbReference type="KEGG" id="tpt:Tpet_1129"/>
<dbReference type="eggNOG" id="COG0496">
    <property type="taxonomic scope" value="Bacteria"/>
</dbReference>
<dbReference type="HOGENOM" id="CLU_045192_1_3_0"/>
<dbReference type="Proteomes" id="UP000006558">
    <property type="component" value="Chromosome"/>
</dbReference>
<dbReference type="GO" id="GO:0005737">
    <property type="term" value="C:cytoplasm"/>
    <property type="evidence" value="ECO:0007669"/>
    <property type="project" value="UniProtKB-SubCell"/>
</dbReference>
<dbReference type="GO" id="GO:0008254">
    <property type="term" value="F:3'-nucleotidase activity"/>
    <property type="evidence" value="ECO:0007669"/>
    <property type="project" value="TreeGrafter"/>
</dbReference>
<dbReference type="GO" id="GO:0008253">
    <property type="term" value="F:5'-nucleotidase activity"/>
    <property type="evidence" value="ECO:0007669"/>
    <property type="project" value="UniProtKB-UniRule"/>
</dbReference>
<dbReference type="GO" id="GO:0004309">
    <property type="term" value="F:exopolyphosphatase activity"/>
    <property type="evidence" value="ECO:0007669"/>
    <property type="project" value="TreeGrafter"/>
</dbReference>
<dbReference type="GO" id="GO:0046872">
    <property type="term" value="F:metal ion binding"/>
    <property type="evidence" value="ECO:0007669"/>
    <property type="project" value="UniProtKB-UniRule"/>
</dbReference>
<dbReference type="GO" id="GO:0000166">
    <property type="term" value="F:nucleotide binding"/>
    <property type="evidence" value="ECO:0007669"/>
    <property type="project" value="UniProtKB-KW"/>
</dbReference>
<dbReference type="FunFam" id="3.40.1210.10:FF:000001">
    <property type="entry name" value="5'/3'-nucleotidase SurE"/>
    <property type="match status" value="1"/>
</dbReference>
<dbReference type="Gene3D" id="3.40.1210.10">
    <property type="entry name" value="Survival protein SurE-like phosphatase/nucleotidase"/>
    <property type="match status" value="1"/>
</dbReference>
<dbReference type="HAMAP" id="MF_00060">
    <property type="entry name" value="SurE"/>
    <property type="match status" value="1"/>
</dbReference>
<dbReference type="InterPro" id="IPR030048">
    <property type="entry name" value="SurE"/>
</dbReference>
<dbReference type="InterPro" id="IPR002828">
    <property type="entry name" value="SurE-like_Pase/nucleotidase"/>
</dbReference>
<dbReference type="InterPro" id="IPR036523">
    <property type="entry name" value="SurE-like_sf"/>
</dbReference>
<dbReference type="NCBIfam" id="NF001490">
    <property type="entry name" value="PRK00346.1-4"/>
    <property type="match status" value="1"/>
</dbReference>
<dbReference type="NCBIfam" id="NF001492">
    <property type="entry name" value="PRK00346.2-2"/>
    <property type="match status" value="1"/>
</dbReference>
<dbReference type="NCBIfam" id="NF010545">
    <property type="entry name" value="PRK13935.1"/>
    <property type="match status" value="1"/>
</dbReference>
<dbReference type="NCBIfam" id="TIGR00087">
    <property type="entry name" value="surE"/>
    <property type="match status" value="1"/>
</dbReference>
<dbReference type="PANTHER" id="PTHR30457">
    <property type="entry name" value="5'-NUCLEOTIDASE SURE"/>
    <property type="match status" value="1"/>
</dbReference>
<dbReference type="PANTHER" id="PTHR30457:SF12">
    <property type="entry name" value="5'_3'-NUCLEOTIDASE SURE"/>
    <property type="match status" value="1"/>
</dbReference>
<dbReference type="Pfam" id="PF01975">
    <property type="entry name" value="SurE"/>
    <property type="match status" value="1"/>
</dbReference>
<dbReference type="SUPFAM" id="SSF64167">
    <property type="entry name" value="SurE-like"/>
    <property type="match status" value="1"/>
</dbReference>
<sequence>MRILVTNDDGIQSKGIIILAELLSEEHDVFVVAPDKERSATGHSITIHVPLWIKKVFISERVVAYSTTGTPADCVKLAYNVIMDKKVDLIVSGVNRGPNMGMDILYSGTVSGAMEGAMMNIPSIAISSANYESPDFEGAARFLIDFLKEFDFSLLDPFTMLNINVPAGEIKGWKFTRQSRRRWNDYFEERVSPFGEKYYWMMGEVIEDDDRDDVDYKAVREGYVSITPIHPFLTNERCLKKLREVYD</sequence>